<gene>
    <name type="ordered locus">At2g29640</name>
    <name type="ORF">T27A16.26</name>
</gene>
<keyword id="KW-0378">Hydrolase</keyword>
<keyword id="KW-0547">Nucleotide-binding</keyword>
<keyword id="KW-0645">Protease</keyword>
<keyword id="KW-1185">Reference proteome</keyword>
<keyword id="KW-0833">Ubl conjugation pathway</keyword>
<evidence type="ECO:0000250" key="1"/>
<evidence type="ECO:0000255" key="2">
    <source>
        <dbReference type="PROSITE-ProRule" id="PRU00331"/>
    </source>
</evidence>
<reference key="1">
    <citation type="journal article" date="1999" name="Nature">
        <title>Sequence and analysis of chromosome 2 of the plant Arabidopsis thaliana.</title>
        <authorList>
            <person name="Lin X."/>
            <person name="Kaul S."/>
            <person name="Rounsley S.D."/>
            <person name="Shea T.P."/>
            <person name="Benito M.-I."/>
            <person name="Town C.D."/>
            <person name="Fujii C.Y."/>
            <person name="Mason T.M."/>
            <person name="Bowman C.L."/>
            <person name="Barnstead M.E."/>
            <person name="Feldblyum T.V."/>
            <person name="Buell C.R."/>
            <person name="Ketchum K.A."/>
            <person name="Lee J.J."/>
            <person name="Ronning C.M."/>
            <person name="Koo H.L."/>
            <person name="Moffat K.S."/>
            <person name="Cronin L.A."/>
            <person name="Shen M."/>
            <person name="Pai G."/>
            <person name="Van Aken S."/>
            <person name="Umayam L."/>
            <person name="Tallon L.J."/>
            <person name="Gill J.E."/>
            <person name="Adams M.D."/>
            <person name="Carrera A.J."/>
            <person name="Creasy T.H."/>
            <person name="Goodman H.M."/>
            <person name="Somerville C.R."/>
            <person name="Copenhaver G.P."/>
            <person name="Preuss D."/>
            <person name="Nierman W.C."/>
            <person name="White O."/>
            <person name="Eisen J.A."/>
            <person name="Salzberg S.L."/>
            <person name="Fraser C.M."/>
            <person name="Venter J.C."/>
        </authorList>
    </citation>
    <scope>NUCLEOTIDE SEQUENCE [LARGE SCALE GENOMIC DNA]</scope>
    <source>
        <strain>cv. Columbia</strain>
    </source>
</reference>
<reference key="2">
    <citation type="journal article" date="2017" name="Plant J.">
        <title>Araport11: a complete reannotation of the Arabidopsis thaliana reference genome.</title>
        <authorList>
            <person name="Cheng C.Y."/>
            <person name="Krishnakumar V."/>
            <person name="Chan A.P."/>
            <person name="Thibaud-Nissen F."/>
            <person name="Schobel S."/>
            <person name="Town C.D."/>
        </authorList>
    </citation>
    <scope>GENOME REANNOTATION</scope>
    <source>
        <strain>cv. Columbia</strain>
    </source>
</reference>
<reference key="3">
    <citation type="journal article" date="2003" name="Proteins">
        <title>Structural modeling of ataxin-3 reveals distant homology to adaptins.</title>
        <authorList>
            <person name="Albrecht M."/>
            <person name="Hoffmann D."/>
            <person name="Evert B.O."/>
            <person name="Schmitt I."/>
            <person name="Wuellner U."/>
            <person name="Lengauer T."/>
        </authorList>
    </citation>
    <scope>3D-STRUCTURE MODELING</scope>
</reference>
<accession>O82391</accession>
<protein>
    <recommendedName>
        <fullName>Josephin-like protein</fullName>
        <ecNumber>3.4.19.12</ecNumber>
    </recommendedName>
</protein>
<sequence>MADSESKIYHERQRLQFCLLHCLNNLFQDKDAFTKESLNSIAEKLETNDPNKETWTPLSFVLKPHHNTITGNYDVNVMITALEGKGKSVVWHDKRIGASSIDLDDADTLMGIVLNVPVKRYGGLWRSRHWVVVRKINGVWYNLDSDLVVPQLFRDDDEVRGFLDQNLSLDVIGLIWNLPYNANQLPLASNYRVVITHWSDLNGMFSHVTNYPLDFDVYPQVSSKVSAIYKATGTKRFNANTRPVTPGKQSSVKGPYYKNPGCTTSCGLRLPRKTECTAARLIKDLSCKFVMGLRLVVMRKKKKKRSPPLKKASSSGISQPSVISVVNDNNHRSAAIEDCIQFINSSSSFTRSNSTCGSKS</sequence>
<comment type="function">
    <text evidence="1">May act as a deubiquitinating enzyme.</text>
</comment>
<comment type="catalytic activity">
    <reaction>
        <text>Thiol-dependent hydrolysis of ester, thioester, amide, peptide and isopeptide bonds formed by the C-terminal Gly of ubiquitin (a 76-residue protein attached to proteins as an intracellular targeting signal).</text>
        <dbReference type="EC" id="3.4.19.12"/>
    </reaction>
</comment>
<organism>
    <name type="scientific">Arabidopsis thaliana</name>
    <name type="common">Mouse-ear cress</name>
    <dbReference type="NCBI Taxonomy" id="3702"/>
    <lineage>
        <taxon>Eukaryota</taxon>
        <taxon>Viridiplantae</taxon>
        <taxon>Streptophyta</taxon>
        <taxon>Embryophyta</taxon>
        <taxon>Tracheophyta</taxon>
        <taxon>Spermatophyta</taxon>
        <taxon>Magnoliopsida</taxon>
        <taxon>eudicotyledons</taxon>
        <taxon>Gunneridae</taxon>
        <taxon>Pentapetalae</taxon>
        <taxon>rosids</taxon>
        <taxon>malvids</taxon>
        <taxon>Brassicales</taxon>
        <taxon>Brassicaceae</taxon>
        <taxon>Camelineae</taxon>
        <taxon>Arabidopsis</taxon>
    </lineage>
</organism>
<proteinExistence type="evidence at transcript level"/>
<name>JOSL_ARATH</name>
<feature type="chain" id="PRO_0000053846" description="Josephin-like protein">
    <location>
        <begin position="1"/>
        <end position="360"/>
    </location>
</feature>
<feature type="domain" description="Josephin" evidence="2">
    <location>
        <begin position="5"/>
        <end position="192"/>
    </location>
</feature>
<feature type="active site" description="Nucleophile" evidence="2">
    <location>
        <position position="18"/>
    </location>
</feature>
<feature type="active site" description="Proton acceptor" evidence="2">
    <location>
        <position position="129"/>
    </location>
</feature>
<dbReference type="EC" id="3.4.19.12"/>
<dbReference type="EMBL" id="AC005496">
    <property type="protein sequence ID" value="AAC35231.1"/>
    <property type="molecule type" value="Genomic_DNA"/>
</dbReference>
<dbReference type="EMBL" id="CP002685">
    <property type="protein sequence ID" value="AEC08284.1"/>
    <property type="molecule type" value="Genomic_DNA"/>
</dbReference>
<dbReference type="PIR" id="G84698">
    <property type="entry name" value="G84698"/>
</dbReference>
<dbReference type="SMR" id="O82391"/>
<dbReference type="STRING" id="3702.O82391"/>
<dbReference type="MEROPS" id="C86.A02"/>
<dbReference type="GlyGen" id="O82391">
    <property type="glycosylation" value="1 site"/>
</dbReference>
<dbReference type="PaxDb" id="3702-AT2G29640.1"/>
<dbReference type="ProteomicsDB" id="232271"/>
<dbReference type="EnsemblPlants" id="AT2G29640.1">
    <property type="protein sequence ID" value="AT2G29640.1"/>
    <property type="gene ID" value="AT2G29640"/>
</dbReference>
<dbReference type="GeneID" id="817514"/>
<dbReference type="Gramene" id="AT2G29640.1">
    <property type="protein sequence ID" value="AT2G29640.1"/>
    <property type="gene ID" value="AT2G29640"/>
</dbReference>
<dbReference type="KEGG" id="ath:AT2G29640"/>
<dbReference type="Araport" id="AT2G29640"/>
<dbReference type="TAIR" id="AT2G29640">
    <property type="gene designation" value="JOSL"/>
</dbReference>
<dbReference type="eggNOG" id="KOG2934">
    <property type="taxonomic scope" value="Eukaryota"/>
</dbReference>
<dbReference type="HOGENOM" id="CLU_065889_0_0_1"/>
<dbReference type="InParanoid" id="O82391"/>
<dbReference type="OMA" id="GPYYKNP"/>
<dbReference type="PhylomeDB" id="O82391"/>
<dbReference type="PRO" id="PR:O82391"/>
<dbReference type="Proteomes" id="UP000006548">
    <property type="component" value="Chromosome 2"/>
</dbReference>
<dbReference type="ExpressionAtlas" id="O82391">
    <property type="expression patterns" value="baseline and differential"/>
</dbReference>
<dbReference type="GO" id="GO:0004843">
    <property type="term" value="F:cysteine-type deubiquitinase activity"/>
    <property type="evidence" value="ECO:0007669"/>
    <property type="project" value="UniProtKB-EC"/>
</dbReference>
<dbReference type="GO" id="GO:0000166">
    <property type="term" value="F:nucleotide binding"/>
    <property type="evidence" value="ECO:0007669"/>
    <property type="project" value="UniProtKB-KW"/>
</dbReference>
<dbReference type="GO" id="GO:0016579">
    <property type="term" value="P:protein deubiquitination"/>
    <property type="evidence" value="ECO:0007669"/>
    <property type="project" value="InterPro"/>
</dbReference>
<dbReference type="GO" id="GO:0006508">
    <property type="term" value="P:proteolysis"/>
    <property type="evidence" value="ECO:0007669"/>
    <property type="project" value="UniProtKB-KW"/>
</dbReference>
<dbReference type="Gene3D" id="3.90.70.40">
    <property type="match status" value="1"/>
</dbReference>
<dbReference type="InterPro" id="IPR040053">
    <property type="entry name" value="JOSD1/2"/>
</dbReference>
<dbReference type="InterPro" id="IPR006155">
    <property type="entry name" value="Josephin"/>
</dbReference>
<dbReference type="PANTHER" id="PTHR13291">
    <property type="entry name" value="JOSEPHIN 1, 2"/>
    <property type="match status" value="1"/>
</dbReference>
<dbReference type="PANTHER" id="PTHR13291:SF0">
    <property type="entry name" value="JOSEPHIN-LIKE PROTEIN"/>
    <property type="match status" value="1"/>
</dbReference>
<dbReference type="Pfam" id="PF02099">
    <property type="entry name" value="Josephin"/>
    <property type="match status" value="1"/>
</dbReference>
<dbReference type="SMART" id="SM01246">
    <property type="entry name" value="Josephin"/>
    <property type="match status" value="1"/>
</dbReference>
<dbReference type="PROSITE" id="PS50957">
    <property type="entry name" value="JOSEPHIN"/>
    <property type="match status" value="1"/>
</dbReference>